<protein>
    <recommendedName>
        <fullName evidence="1">Holliday junction branch migration complex subunit RuvB</fullName>
        <ecNumber evidence="1">3.6.4.-</ecNumber>
    </recommendedName>
</protein>
<name>RUVB_STAA1</name>
<keyword id="KW-0067">ATP-binding</keyword>
<keyword id="KW-0963">Cytoplasm</keyword>
<keyword id="KW-0227">DNA damage</keyword>
<keyword id="KW-0233">DNA recombination</keyword>
<keyword id="KW-0234">DNA repair</keyword>
<keyword id="KW-0238">DNA-binding</keyword>
<keyword id="KW-0378">Hydrolase</keyword>
<keyword id="KW-0547">Nucleotide-binding</keyword>
<gene>
    <name evidence="1" type="primary">ruvB</name>
    <name type="ordered locus">SAHV_1628</name>
</gene>
<sequence length="334" mass="37646">MNERMVDQSMHSEETDFELSLRPTRLRQYIGQNSIKSNLEVFIKAAKLRHEPLDHVLLFGPPGLGKTTLSNIIANEMEVNIRTVSGPSLERPGDLAAILSGLQPGDVLFIDEIHRLSSVVEEVLYPAMEDFFLDIIIGKGDEARSIRIDLPPFTLVGATTRAGSLTGPLRDRFGVHLRLEYYNESDLKEIIIRTAEVLGTGIDEESAIELAKRSRGTPRVANRLLKRVRDFQQVNEDEQIYIETTKHALGLLQVDQHGLDYIDHKMMNCIIKQYNGGPVGLDTIAVTIGEERITIEDVYEPFLIQKGFLERTPRGRKATPLAYEHFAKSNEERG</sequence>
<accession>A7X357</accession>
<feature type="chain" id="PRO_1000001483" description="Holliday junction branch migration complex subunit RuvB">
    <location>
        <begin position="1"/>
        <end position="334"/>
    </location>
</feature>
<feature type="region of interest" description="Large ATPase domain (RuvB-L)" evidence="1">
    <location>
        <begin position="1"/>
        <end position="182"/>
    </location>
</feature>
<feature type="region of interest" description="Small ATPAse domain (RuvB-S)" evidence="1">
    <location>
        <begin position="183"/>
        <end position="253"/>
    </location>
</feature>
<feature type="region of interest" description="Head domain (RuvB-H)" evidence="1">
    <location>
        <begin position="256"/>
        <end position="334"/>
    </location>
</feature>
<feature type="binding site" evidence="1">
    <location>
        <position position="21"/>
    </location>
    <ligand>
        <name>ATP</name>
        <dbReference type="ChEBI" id="CHEBI:30616"/>
    </ligand>
</feature>
<feature type="binding site" evidence="1">
    <location>
        <position position="22"/>
    </location>
    <ligand>
        <name>ATP</name>
        <dbReference type="ChEBI" id="CHEBI:30616"/>
    </ligand>
</feature>
<feature type="binding site" evidence="1">
    <location>
        <position position="63"/>
    </location>
    <ligand>
        <name>ATP</name>
        <dbReference type="ChEBI" id="CHEBI:30616"/>
    </ligand>
</feature>
<feature type="binding site" evidence="1">
    <location>
        <position position="66"/>
    </location>
    <ligand>
        <name>ATP</name>
        <dbReference type="ChEBI" id="CHEBI:30616"/>
    </ligand>
</feature>
<feature type="binding site" evidence="1">
    <location>
        <position position="67"/>
    </location>
    <ligand>
        <name>ATP</name>
        <dbReference type="ChEBI" id="CHEBI:30616"/>
    </ligand>
</feature>
<feature type="binding site" evidence="1">
    <location>
        <position position="67"/>
    </location>
    <ligand>
        <name>Mg(2+)</name>
        <dbReference type="ChEBI" id="CHEBI:18420"/>
    </ligand>
</feature>
<feature type="binding site" evidence="1">
    <location>
        <position position="68"/>
    </location>
    <ligand>
        <name>ATP</name>
        <dbReference type="ChEBI" id="CHEBI:30616"/>
    </ligand>
</feature>
<feature type="binding site" evidence="1">
    <location>
        <begin position="129"/>
        <end position="131"/>
    </location>
    <ligand>
        <name>ATP</name>
        <dbReference type="ChEBI" id="CHEBI:30616"/>
    </ligand>
</feature>
<feature type="binding site" evidence="1">
    <location>
        <position position="172"/>
    </location>
    <ligand>
        <name>ATP</name>
        <dbReference type="ChEBI" id="CHEBI:30616"/>
    </ligand>
</feature>
<feature type="binding site" evidence="1">
    <location>
        <position position="182"/>
    </location>
    <ligand>
        <name>ATP</name>
        <dbReference type="ChEBI" id="CHEBI:30616"/>
    </ligand>
</feature>
<feature type="binding site" evidence="1">
    <location>
        <position position="219"/>
    </location>
    <ligand>
        <name>ATP</name>
        <dbReference type="ChEBI" id="CHEBI:30616"/>
    </ligand>
</feature>
<feature type="binding site" evidence="1">
    <location>
        <position position="292"/>
    </location>
    <ligand>
        <name>DNA</name>
        <dbReference type="ChEBI" id="CHEBI:16991"/>
    </ligand>
</feature>
<feature type="binding site" evidence="1">
    <location>
        <position position="311"/>
    </location>
    <ligand>
        <name>DNA</name>
        <dbReference type="ChEBI" id="CHEBI:16991"/>
    </ligand>
</feature>
<feature type="binding site" evidence="1">
    <location>
        <position position="316"/>
    </location>
    <ligand>
        <name>DNA</name>
        <dbReference type="ChEBI" id="CHEBI:16991"/>
    </ligand>
</feature>
<reference key="1">
    <citation type="journal article" date="2008" name="Antimicrob. Agents Chemother.">
        <title>Mutated response regulator graR is responsible for phenotypic conversion of Staphylococcus aureus from heterogeneous vancomycin-intermediate resistance to vancomycin-intermediate resistance.</title>
        <authorList>
            <person name="Neoh H.-M."/>
            <person name="Cui L."/>
            <person name="Yuzawa H."/>
            <person name="Takeuchi F."/>
            <person name="Matsuo M."/>
            <person name="Hiramatsu K."/>
        </authorList>
    </citation>
    <scope>NUCLEOTIDE SEQUENCE [LARGE SCALE GENOMIC DNA]</scope>
    <source>
        <strain>Mu3 / ATCC 700698</strain>
    </source>
</reference>
<organism>
    <name type="scientific">Staphylococcus aureus (strain Mu3 / ATCC 700698)</name>
    <dbReference type="NCBI Taxonomy" id="418127"/>
    <lineage>
        <taxon>Bacteria</taxon>
        <taxon>Bacillati</taxon>
        <taxon>Bacillota</taxon>
        <taxon>Bacilli</taxon>
        <taxon>Bacillales</taxon>
        <taxon>Staphylococcaceae</taxon>
        <taxon>Staphylococcus</taxon>
    </lineage>
</organism>
<comment type="function">
    <text evidence="1">The RuvA-RuvB-RuvC complex processes Holliday junction (HJ) DNA during genetic recombination and DNA repair, while the RuvA-RuvB complex plays an important role in the rescue of blocked DNA replication forks via replication fork reversal (RFR). RuvA specifically binds to HJ cruciform DNA, conferring on it an open structure. The RuvB hexamer acts as an ATP-dependent pump, pulling dsDNA into and through the RuvAB complex. RuvB forms 2 homohexamers on either side of HJ DNA bound by 1 or 2 RuvA tetramers; 4 subunits per hexamer contact DNA at a time. Coordinated motions by a converter formed by DNA-disengaged RuvB subunits stimulates ATP hydrolysis and nucleotide exchange. Immobilization of the converter enables RuvB to convert the ATP-contained energy into a lever motion, pulling 2 nucleotides of DNA out of the RuvA tetramer per ATP hydrolyzed, thus driving DNA branch migration. The RuvB motors rotate together with the DNA substrate, which together with the progressing nucleotide cycle form the mechanistic basis for DNA recombination by continuous HJ branch migration. Branch migration allows RuvC to scan DNA until it finds its consensus sequence, where it cleaves and resolves cruciform DNA.</text>
</comment>
<comment type="catalytic activity">
    <reaction evidence="1">
        <text>ATP + H2O = ADP + phosphate + H(+)</text>
        <dbReference type="Rhea" id="RHEA:13065"/>
        <dbReference type="ChEBI" id="CHEBI:15377"/>
        <dbReference type="ChEBI" id="CHEBI:15378"/>
        <dbReference type="ChEBI" id="CHEBI:30616"/>
        <dbReference type="ChEBI" id="CHEBI:43474"/>
        <dbReference type="ChEBI" id="CHEBI:456216"/>
    </reaction>
</comment>
<comment type="subunit">
    <text evidence="1">Homohexamer. Forms an RuvA(8)-RuvB(12)-Holliday junction (HJ) complex. HJ DNA is sandwiched between 2 RuvA tetramers; dsDNA enters through RuvA and exits via RuvB. An RuvB hexamer assembles on each DNA strand where it exits the tetramer. Each RuvB hexamer is contacted by two RuvA subunits (via domain III) on 2 adjacent RuvB subunits; this complex drives branch migration. In the full resolvosome a probable DNA-RuvA(4)-RuvB(12)-RuvC(2) complex forms which resolves the HJ.</text>
</comment>
<comment type="subcellular location">
    <subcellularLocation>
        <location evidence="1">Cytoplasm</location>
    </subcellularLocation>
</comment>
<comment type="domain">
    <text evidence="1">Has 3 domains, the large (RuvB-L) and small ATPase (RuvB-S) domains and the C-terminal head (RuvB-H) domain. The head domain binds DNA, while the ATPase domains jointly bind ATP, ADP or are empty depending on the state of the subunit in the translocation cycle. During a single DNA translocation step the structure of each domain remains the same, but their relative positions change.</text>
</comment>
<comment type="similarity">
    <text evidence="1">Belongs to the RuvB family.</text>
</comment>
<proteinExistence type="inferred from homology"/>
<dbReference type="EC" id="3.6.4.-" evidence="1"/>
<dbReference type="EMBL" id="AP009324">
    <property type="protein sequence ID" value="BAF78511.1"/>
    <property type="molecule type" value="Genomic_DNA"/>
</dbReference>
<dbReference type="RefSeq" id="WP_001005768.1">
    <property type="nucleotide sequence ID" value="NC_009782.1"/>
</dbReference>
<dbReference type="SMR" id="A7X357"/>
<dbReference type="KEGG" id="saw:SAHV_1628"/>
<dbReference type="HOGENOM" id="CLU_055599_1_0_9"/>
<dbReference type="GO" id="GO:0005737">
    <property type="term" value="C:cytoplasm"/>
    <property type="evidence" value="ECO:0007669"/>
    <property type="project" value="UniProtKB-SubCell"/>
</dbReference>
<dbReference type="GO" id="GO:0048476">
    <property type="term" value="C:Holliday junction resolvase complex"/>
    <property type="evidence" value="ECO:0007669"/>
    <property type="project" value="UniProtKB-UniRule"/>
</dbReference>
<dbReference type="GO" id="GO:0005524">
    <property type="term" value="F:ATP binding"/>
    <property type="evidence" value="ECO:0007669"/>
    <property type="project" value="UniProtKB-UniRule"/>
</dbReference>
<dbReference type="GO" id="GO:0016887">
    <property type="term" value="F:ATP hydrolysis activity"/>
    <property type="evidence" value="ECO:0007669"/>
    <property type="project" value="InterPro"/>
</dbReference>
<dbReference type="GO" id="GO:0000400">
    <property type="term" value="F:four-way junction DNA binding"/>
    <property type="evidence" value="ECO:0007669"/>
    <property type="project" value="UniProtKB-UniRule"/>
</dbReference>
<dbReference type="GO" id="GO:0009378">
    <property type="term" value="F:four-way junction helicase activity"/>
    <property type="evidence" value="ECO:0007669"/>
    <property type="project" value="InterPro"/>
</dbReference>
<dbReference type="GO" id="GO:0006310">
    <property type="term" value="P:DNA recombination"/>
    <property type="evidence" value="ECO:0007669"/>
    <property type="project" value="UniProtKB-UniRule"/>
</dbReference>
<dbReference type="GO" id="GO:0006281">
    <property type="term" value="P:DNA repair"/>
    <property type="evidence" value="ECO:0007669"/>
    <property type="project" value="UniProtKB-UniRule"/>
</dbReference>
<dbReference type="CDD" id="cd00009">
    <property type="entry name" value="AAA"/>
    <property type="match status" value="1"/>
</dbReference>
<dbReference type="Gene3D" id="1.10.8.60">
    <property type="match status" value="1"/>
</dbReference>
<dbReference type="Gene3D" id="3.40.50.300">
    <property type="entry name" value="P-loop containing nucleotide triphosphate hydrolases"/>
    <property type="match status" value="1"/>
</dbReference>
<dbReference type="Gene3D" id="1.10.10.10">
    <property type="entry name" value="Winged helix-like DNA-binding domain superfamily/Winged helix DNA-binding domain"/>
    <property type="match status" value="1"/>
</dbReference>
<dbReference type="HAMAP" id="MF_00016">
    <property type="entry name" value="DNA_HJ_migration_RuvB"/>
    <property type="match status" value="1"/>
</dbReference>
<dbReference type="InterPro" id="IPR003593">
    <property type="entry name" value="AAA+_ATPase"/>
</dbReference>
<dbReference type="InterPro" id="IPR041445">
    <property type="entry name" value="AAA_lid_4"/>
</dbReference>
<dbReference type="InterPro" id="IPR004605">
    <property type="entry name" value="DNA_helicase_Holl-junc_RuvB"/>
</dbReference>
<dbReference type="InterPro" id="IPR027417">
    <property type="entry name" value="P-loop_NTPase"/>
</dbReference>
<dbReference type="InterPro" id="IPR008824">
    <property type="entry name" value="RuvB-like_N"/>
</dbReference>
<dbReference type="InterPro" id="IPR008823">
    <property type="entry name" value="RuvB_C"/>
</dbReference>
<dbReference type="InterPro" id="IPR036388">
    <property type="entry name" value="WH-like_DNA-bd_sf"/>
</dbReference>
<dbReference type="InterPro" id="IPR036390">
    <property type="entry name" value="WH_DNA-bd_sf"/>
</dbReference>
<dbReference type="NCBIfam" id="NF000868">
    <property type="entry name" value="PRK00080.1"/>
    <property type="match status" value="1"/>
</dbReference>
<dbReference type="NCBIfam" id="TIGR00635">
    <property type="entry name" value="ruvB"/>
    <property type="match status" value="1"/>
</dbReference>
<dbReference type="PANTHER" id="PTHR42848">
    <property type="match status" value="1"/>
</dbReference>
<dbReference type="PANTHER" id="PTHR42848:SF1">
    <property type="entry name" value="HOLLIDAY JUNCTION BRANCH MIGRATION COMPLEX SUBUNIT RUVB"/>
    <property type="match status" value="1"/>
</dbReference>
<dbReference type="Pfam" id="PF17864">
    <property type="entry name" value="AAA_lid_4"/>
    <property type="match status" value="1"/>
</dbReference>
<dbReference type="Pfam" id="PF05491">
    <property type="entry name" value="RuvB_C"/>
    <property type="match status" value="1"/>
</dbReference>
<dbReference type="Pfam" id="PF05496">
    <property type="entry name" value="RuvB_N"/>
    <property type="match status" value="1"/>
</dbReference>
<dbReference type="SMART" id="SM00382">
    <property type="entry name" value="AAA"/>
    <property type="match status" value="1"/>
</dbReference>
<dbReference type="SUPFAM" id="SSF52540">
    <property type="entry name" value="P-loop containing nucleoside triphosphate hydrolases"/>
    <property type="match status" value="1"/>
</dbReference>
<dbReference type="SUPFAM" id="SSF46785">
    <property type="entry name" value="Winged helix' DNA-binding domain"/>
    <property type="match status" value="1"/>
</dbReference>
<evidence type="ECO:0000255" key="1">
    <source>
        <dbReference type="HAMAP-Rule" id="MF_00016"/>
    </source>
</evidence>